<evidence type="ECO:0000269" key="1">
    <source>
    </source>
</evidence>
<organism>
    <name type="scientific">Lissachatina fulica</name>
    <name type="common">Giant African land snail</name>
    <name type="synonym">Achatina fulica</name>
    <dbReference type="NCBI Taxonomy" id="2315439"/>
    <lineage>
        <taxon>Eukaryota</taxon>
        <taxon>Metazoa</taxon>
        <taxon>Spiralia</taxon>
        <taxon>Lophotrochozoa</taxon>
        <taxon>Mollusca</taxon>
        <taxon>Gastropoda</taxon>
        <taxon>Heterobranchia</taxon>
        <taxon>Euthyneura</taxon>
        <taxon>Panpulmonata</taxon>
        <taxon>Eupulmonata</taxon>
        <taxon>Stylommatophora</taxon>
        <taxon>Helicina</taxon>
        <taxon>Achatinoidea</taxon>
        <taxon>Achatinidae</taxon>
        <taxon>Lissachatina</taxon>
    </lineage>
</organism>
<accession>P35919</accession>
<comment type="function">
    <text>Exhibits modulatory effects on the peripheral nervous system. Inhibits activity on a central neuron.</text>
</comment>
<feature type="peptide" id="PRO_0000044229" description="WWamide-1">
    <location>
        <begin position="1"/>
        <end position="7"/>
    </location>
</feature>
<feature type="modified residue" description="Tryptophan amide" evidence="1">
    <location>
        <position position="7"/>
    </location>
</feature>
<proteinExistence type="evidence at protein level"/>
<protein>
    <recommendedName>
        <fullName>WWamide-1</fullName>
    </recommendedName>
</protein>
<keyword id="KW-0027">Amidation</keyword>
<keyword id="KW-0903">Direct protein sequencing</keyword>
<keyword id="KW-0527">Neuropeptide</keyword>
<name>WWA1_LISFU</name>
<dbReference type="PIR" id="S33245">
    <property type="entry name" value="S33245"/>
</dbReference>
<dbReference type="GO" id="GO:0007218">
    <property type="term" value="P:neuropeptide signaling pathway"/>
    <property type="evidence" value="ECO:0007669"/>
    <property type="project" value="UniProtKB-KW"/>
</dbReference>
<sequence length="7" mass="993">WREMSVW</sequence>
<reference key="1">
    <citation type="journal article" date="1993" name="FEBS Lett.">
        <title>WWamide-1, -2 and -3: novel neuromodulatory peptides isolated from ganglia of the African giant snail, Achatina fulica.</title>
        <authorList>
            <person name="Minakata H."/>
            <person name="Ikeda T."/>
            <person name="Muneoka Y."/>
            <person name="Kobayashi M."/>
            <person name="Nomoto K."/>
        </authorList>
    </citation>
    <scope>PROTEIN SEQUENCE</scope>
    <scope>AMIDATION AT TRP-7</scope>
    <source>
        <tissue>Ganglion</tissue>
    </source>
</reference>